<accession>Q9TDN1</accession>
<gene>
    <name type="primary">MT-CYB</name>
    <name type="synonym">COB</name>
    <name type="synonym">CYTB</name>
    <name type="synonym">MTCYB</name>
</gene>
<reference key="1">
    <citation type="journal article" date="1999" name="Mar. Mamm. Sci.">
        <title>Phylogenetic relationships among the delphinid cetaceans based on full cytochrome b sequences.</title>
        <authorList>
            <person name="LeDuc R.G."/>
            <person name="Perrin W.F."/>
            <person name="Dizon A.E."/>
        </authorList>
    </citation>
    <scope>NUCLEOTIDE SEQUENCE [GENOMIC DNA]</scope>
</reference>
<feature type="chain" id="PRO_0000060974" description="Cytochrome b">
    <location>
        <begin position="1"/>
        <end position="379"/>
    </location>
</feature>
<feature type="transmembrane region" description="Helical" evidence="2">
    <location>
        <begin position="33"/>
        <end position="53"/>
    </location>
</feature>
<feature type="transmembrane region" description="Helical" evidence="2">
    <location>
        <begin position="77"/>
        <end position="98"/>
    </location>
</feature>
<feature type="transmembrane region" description="Helical" evidence="2">
    <location>
        <begin position="113"/>
        <end position="133"/>
    </location>
</feature>
<feature type="transmembrane region" description="Helical" evidence="2">
    <location>
        <begin position="178"/>
        <end position="198"/>
    </location>
</feature>
<feature type="transmembrane region" description="Helical" evidence="2">
    <location>
        <begin position="226"/>
        <end position="246"/>
    </location>
</feature>
<feature type="transmembrane region" description="Helical" evidence="2">
    <location>
        <begin position="288"/>
        <end position="308"/>
    </location>
</feature>
<feature type="transmembrane region" description="Helical" evidence="2">
    <location>
        <begin position="320"/>
        <end position="340"/>
    </location>
</feature>
<feature type="transmembrane region" description="Helical" evidence="2">
    <location>
        <begin position="347"/>
        <end position="367"/>
    </location>
</feature>
<feature type="binding site" description="axial binding residue" evidence="2">
    <location>
        <position position="83"/>
    </location>
    <ligand>
        <name>heme b</name>
        <dbReference type="ChEBI" id="CHEBI:60344"/>
        <label>b562</label>
    </ligand>
    <ligandPart>
        <name>Fe</name>
        <dbReference type="ChEBI" id="CHEBI:18248"/>
    </ligandPart>
</feature>
<feature type="binding site" description="axial binding residue" evidence="2">
    <location>
        <position position="97"/>
    </location>
    <ligand>
        <name>heme b</name>
        <dbReference type="ChEBI" id="CHEBI:60344"/>
        <label>b566</label>
    </ligand>
    <ligandPart>
        <name>Fe</name>
        <dbReference type="ChEBI" id="CHEBI:18248"/>
    </ligandPart>
</feature>
<feature type="binding site" description="axial binding residue" evidence="2">
    <location>
        <position position="182"/>
    </location>
    <ligand>
        <name>heme b</name>
        <dbReference type="ChEBI" id="CHEBI:60344"/>
        <label>b562</label>
    </ligand>
    <ligandPart>
        <name>Fe</name>
        <dbReference type="ChEBI" id="CHEBI:18248"/>
    </ligandPart>
</feature>
<feature type="binding site" description="axial binding residue" evidence="2">
    <location>
        <position position="196"/>
    </location>
    <ligand>
        <name>heme b</name>
        <dbReference type="ChEBI" id="CHEBI:60344"/>
        <label>b566</label>
    </ligand>
    <ligandPart>
        <name>Fe</name>
        <dbReference type="ChEBI" id="CHEBI:18248"/>
    </ligandPart>
</feature>
<feature type="binding site" evidence="2">
    <location>
        <position position="201"/>
    </location>
    <ligand>
        <name>a ubiquinone</name>
        <dbReference type="ChEBI" id="CHEBI:16389"/>
    </ligand>
</feature>
<proteinExistence type="inferred from homology"/>
<sequence>MTNIRKTHPLMKIINNAFIDLPTPSNISSWWNFGSLLGLCLIMQILTGLFLAMHYTPDTSTAFSSVAHICRDVNYGWFIRYLHANGASMFFICLYAHIGRGLYYGSYMFQETWNIGVLLLLAVMATAFVGYVLPWGQMSFWGATVITNLLSAIPYIGTTLVEWIWGGFSVDKATLTRFFAFHFILPFIITALVAVHLLFLHETGSNNPTGIPSNMDMIPFHPYYTTKDILGALLLILTLLTLTLFTPDLLGDPDNYTPANPLSTPAHIKPEWYFLFAYAILRSIPNKLGGVLALLLSILILIFIPMLQTSKQRSMMFRPFSQLLFWTLIADLLTLTWIGGQPVEHPYIIMGQLASILYFLLILVLMPTVSLIENKLLKW</sequence>
<geneLocation type="mitochondrion"/>
<name>CYB_FERAT</name>
<evidence type="ECO:0000250" key="1"/>
<evidence type="ECO:0000250" key="2">
    <source>
        <dbReference type="UniProtKB" id="P00157"/>
    </source>
</evidence>
<evidence type="ECO:0000255" key="3">
    <source>
        <dbReference type="PROSITE-ProRule" id="PRU00967"/>
    </source>
</evidence>
<evidence type="ECO:0000255" key="4">
    <source>
        <dbReference type="PROSITE-ProRule" id="PRU00968"/>
    </source>
</evidence>
<comment type="function">
    <text evidence="2">Component of the ubiquinol-cytochrome c reductase complex (complex III or cytochrome b-c1 complex) that is part of the mitochondrial respiratory chain. The b-c1 complex mediates electron transfer from ubiquinol to cytochrome c. Contributes to the generation of a proton gradient across the mitochondrial membrane that is then used for ATP synthesis.</text>
</comment>
<comment type="cofactor">
    <cofactor evidence="2">
        <name>heme b</name>
        <dbReference type="ChEBI" id="CHEBI:60344"/>
    </cofactor>
    <text evidence="2">Binds 2 heme b groups non-covalently.</text>
</comment>
<comment type="subunit">
    <text evidence="2">The cytochrome bc1 complex contains 11 subunits: 3 respiratory subunits (MT-CYB, CYC1 and UQCRFS1), 2 core proteins (UQCRC1 and UQCRC2) and 6 low-molecular weight proteins (UQCRH/QCR6, UQCRB/QCR7, UQCRQ/QCR8, UQCR10/QCR9, UQCR11/QCR10 and a cleavage product of UQCRFS1). This cytochrome bc1 complex then forms a dimer.</text>
</comment>
<comment type="subcellular location">
    <subcellularLocation>
        <location evidence="2">Mitochondrion inner membrane</location>
        <topology evidence="2">Multi-pass membrane protein</topology>
    </subcellularLocation>
</comment>
<comment type="miscellaneous">
    <text evidence="1">Heme 1 (or BL or b562) is low-potential and absorbs at about 562 nm, and heme 2 (or BH or b566) is high-potential and absorbs at about 566 nm.</text>
</comment>
<comment type="similarity">
    <text evidence="3 4">Belongs to the cytochrome b family.</text>
</comment>
<comment type="caution">
    <text evidence="2">The full-length protein contains only eight transmembrane helices, not nine as predicted by bioinformatics tools.</text>
</comment>
<keyword id="KW-0249">Electron transport</keyword>
<keyword id="KW-0349">Heme</keyword>
<keyword id="KW-0408">Iron</keyword>
<keyword id="KW-0472">Membrane</keyword>
<keyword id="KW-0479">Metal-binding</keyword>
<keyword id="KW-0496">Mitochondrion</keyword>
<keyword id="KW-0999">Mitochondrion inner membrane</keyword>
<keyword id="KW-0679">Respiratory chain</keyword>
<keyword id="KW-0812">Transmembrane</keyword>
<keyword id="KW-1133">Transmembrane helix</keyword>
<keyword id="KW-0813">Transport</keyword>
<keyword id="KW-0830">Ubiquinone</keyword>
<dbReference type="EMBL" id="AF084052">
    <property type="protein sequence ID" value="AAD54429.1"/>
    <property type="molecule type" value="Genomic_DNA"/>
</dbReference>
<dbReference type="SMR" id="Q9TDN1"/>
<dbReference type="GO" id="GO:0005743">
    <property type="term" value="C:mitochondrial inner membrane"/>
    <property type="evidence" value="ECO:0007669"/>
    <property type="project" value="UniProtKB-SubCell"/>
</dbReference>
<dbReference type="GO" id="GO:0045275">
    <property type="term" value="C:respiratory chain complex III"/>
    <property type="evidence" value="ECO:0007669"/>
    <property type="project" value="InterPro"/>
</dbReference>
<dbReference type="GO" id="GO:0046872">
    <property type="term" value="F:metal ion binding"/>
    <property type="evidence" value="ECO:0007669"/>
    <property type="project" value="UniProtKB-KW"/>
</dbReference>
<dbReference type="GO" id="GO:0008121">
    <property type="term" value="F:ubiquinol-cytochrome-c reductase activity"/>
    <property type="evidence" value="ECO:0007669"/>
    <property type="project" value="InterPro"/>
</dbReference>
<dbReference type="GO" id="GO:0006122">
    <property type="term" value="P:mitochondrial electron transport, ubiquinol to cytochrome c"/>
    <property type="evidence" value="ECO:0007669"/>
    <property type="project" value="TreeGrafter"/>
</dbReference>
<dbReference type="CDD" id="cd00290">
    <property type="entry name" value="cytochrome_b_C"/>
    <property type="match status" value="1"/>
</dbReference>
<dbReference type="CDD" id="cd00284">
    <property type="entry name" value="Cytochrome_b_N"/>
    <property type="match status" value="1"/>
</dbReference>
<dbReference type="FunFam" id="1.20.810.10:FF:000002">
    <property type="entry name" value="Cytochrome b"/>
    <property type="match status" value="1"/>
</dbReference>
<dbReference type="Gene3D" id="1.20.810.10">
    <property type="entry name" value="Cytochrome Bc1 Complex, Chain C"/>
    <property type="match status" value="1"/>
</dbReference>
<dbReference type="InterPro" id="IPR005798">
    <property type="entry name" value="Cyt_b/b6_C"/>
</dbReference>
<dbReference type="InterPro" id="IPR036150">
    <property type="entry name" value="Cyt_b/b6_C_sf"/>
</dbReference>
<dbReference type="InterPro" id="IPR005797">
    <property type="entry name" value="Cyt_b/b6_N"/>
</dbReference>
<dbReference type="InterPro" id="IPR027387">
    <property type="entry name" value="Cytb/b6-like_sf"/>
</dbReference>
<dbReference type="InterPro" id="IPR030689">
    <property type="entry name" value="Cytochrome_b"/>
</dbReference>
<dbReference type="InterPro" id="IPR048260">
    <property type="entry name" value="Cytochrome_b_C_euk/bac"/>
</dbReference>
<dbReference type="InterPro" id="IPR048259">
    <property type="entry name" value="Cytochrome_b_N_euk/bac"/>
</dbReference>
<dbReference type="InterPro" id="IPR016174">
    <property type="entry name" value="Di-haem_cyt_TM"/>
</dbReference>
<dbReference type="PANTHER" id="PTHR19271">
    <property type="entry name" value="CYTOCHROME B"/>
    <property type="match status" value="1"/>
</dbReference>
<dbReference type="PANTHER" id="PTHR19271:SF16">
    <property type="entry name" value="CYTOCHROME B"/>
    <property type="match status" value="1"/>
</dbReference>
<dbReference type="Pfam" id="PF00032">
    <property type="entry name" value="Cytochrom_B_C"/>
    <property type="match status" value="1"/>
</dbReference>
<dbReference type="Pfam" id="PF00033">
    <property type="entry name" value="Cytochrome_B"/>
    <property type="match status" value="1"/>
</dbReference>
<dbReference type="PIRSF" id="PIRSF038885">
    <property type="entry name" value="COB"/>
    <property type="match status" value="1"/>
</dbReference>
<dbReference type="SUPFAM" id="SSF81648">
    <property type="entry name" value="a domain/subunit of cytochrome bc1 complex (Ubiquinol-cytochrome c reductase)"/>
    <property type="match status" value="1"/>
</dbReference>
<dbReference type="SUPFAM" id="SSF81342">
    <property type="entry name" value="Transmembrane di-heme cytochromes"/>
    <property type="match status" value="1"/>
</dbReference>
<dbReference type="PROSITE" id="PS51003">
    <property type="entry name" value="CYTB_CTER"/>
    <property type="match status" value="1"/>
</dbReference>
<dbReference type="PROSITE" id="PS51002">
    <property type="entry name" value="CYTB_NTER"/>
    <property type="match status" value="1"/>
</dbReference>
<protein>
    <recommendedName>
        <fullName>Cytochrome b</fullName>
    </recommendedName>
    <alternativeName>
        <fullName>Complex III subunit 3</fullName>
    </alternativeName>
    <alternativeName>
        <fullName>Complex III subunit III</fullName>
    </alternativeName>
    <alternativeName>
        <fullName>Cytochrome b-c1 complex subunit 3</fullName>
    </alternativeName>
    <alternativeName>
        <fullName>Ubiquinol-cytochrome-c reductase complex cytochrome b subunit</fullName>
    </alternativeName>
</protein>
<organism>
    <name type="scientific">Feresa attenuata</name>
    <name type="common">Pygmy killer whale</name>
    <name type="synonym">Delphinus intermedius</name>
    <dbReference type="NCBI Taxonomy" id="103592"/>
    <lineage>
        <taxon>Eukaryota</taxon>
        <taxon>Metazoa</taxon>
        <taxon>Chordata</taxon>
        <taxon>Craniata</taxon>
        <taxon>Vertebrata</taxon>
        <taxon>Euteleostomi</taxon>
        <taxon>Mammalia</taxon>
        <taxon>Eutheria</taxon>
        <taxon>Laurasiatheria</taxon>
        <taxon>Artiodactyla</taxon>
        <taxon>Whippomorpha</taxon>
        <taxon>Cetacea</taxon>
        <taxon>Odontoceti</taxon>
        <taxon>Delphinidae</taxon>
        <taxon>Feresa</taxon>
    </lineage>
</organism>